<name>TRMD_NITV2</name>
<comment type="function">
    <text evidence="1">Specifically methylates guanosine-37 in various tRNAs.</text>
</comment>
<comment type="catalytic activity">
    <reaction>
        <text>guanosine(37) in tRNA + S-adenosyl-L-methionine = N(1)-methylguanosine(37) in tRNA + S-adenosyl-L-homocysteine + H(+)</text>
        <dbReference type="Rhea" id="RHEA:36899"/>
        <dbReference type="Rhea" id="RHEA-COMP:10145"/>
        <dbReference type="Rhea" id="RHEA-COMP:10147"/>
        <dbReference type="ChEBI" id="CHEBI:15378"/>
        <dbReference type="ChEBI" id="CHEBI:57856"/>
        <dbReference type="ChEBI" id="CHEBI:59789"/>
        <dbReference type="ChEBI" id="CHEBI:73542"/>
        <dbReference type="ChEBI" id="CHEBI:74269"/>
        <dbReference type="EC" id="2.1.1.228"/>
    </reaction>
</comment>
<comment type="subunit">
    <text evidence="1">Homodimer.</text>
</comment>
<comment type="interaction">
    <interactant intactId="EBI-10069213">
        <id>Q72DU3</id>
    </interactant>
    <interactant intactId="EBI-10070463">
        <id>Q72FB7</id>
        <label>DVU_0297</label>
    </interactant>
    <organismsDiffer>false</organismsDiffer>
    <experiments>2</experiments>
</comment>
<comment type="subcellular location">
    <subcellularLocation>
        <location evidence="2">Cytoplasm</location>
    </subcellularLocation>
</comment>
<comment type="similarity">
    <text evidence="2">Belongs to the RNA methyltransferase TrmD family.</text>
</comment>
<feature type="chain" id="PRO_0000060370" description="tRNA (guanine-N(1)-)-methyltransferase">
    <location>
        <begin position="1"/>
        <end position="425"/>
    </location>
</feature>
<feature type="region of interest" description="tRNA (guanine-N(1)-)-methyltransferase">
    <location>
        <begin position="1"/>
        <end position="241"/>
    </location>
</feature>
<feature type="region of interest" description="Unknown">
    <location>
        <begin position="242"/>
        <end position="425"/>
    </location>
</feature>
<feature type="binding site" evidence="1">
    <location>
        <position position="109"/>
    </location>
    <ligand>
        <name>S-adenosyl-L-methionine</name>
        <dbReference type="ChEBI" id="CHEBI:59789"/>
    </ligand>
</feature>
<feature type="binding site" evidence="1">
    <location>
        <begin position="129"/>
        <end position="134"/>
    </location>
    <ligand>
        <name>S-adenosyl-L-methionine</name>
        <dbReference type="ChEBI" id="CHEBI:59789"/>
    </ligand>
</feature>
<organism>
    <name type="scientific">Nitratidesulfovibrio vulgaris (strain ATCC 29579 / DSM 644 / CCUG 34227 / NCIMB 8303 / VKM B-1760 / Hildenborough)</name>
    <name type="common">Desulfovibrio vulgaris</name>
    <dbReference type="NCBI Taxonomy" id="882"/>
    <lineage>
        <taxon>Bacteria</taxon>
        <taxon>Pseudomonadati</taxon>
        <taxon>Thermodesulfobacteriota</taxon>
        <taxon>Desulfovibrionia</taxon>
        <taxon>Desulfovibrionales</taxon>
        <taxon>Desulfovibrionaceae</taxon>
        <taxon>Nitratidesulfovibrio</taxon>
    </lineage>
</organism>
<proteinExistence type="evidence at protein level"/>
<protein>
    <recommendedName>
        <fullName>tRNA (guanine-N(1)-)-methyltransferase</fullName>
        <ecNumber>2.1.1.228</ecNumber>
    </recommendedName>
    <alternativeName>
        <fullName>M1G-methyltransferase</fullName>
    </alternativeName>
    <alternativeName>
        <fullName>tRNA [GM37] methyltransferase</fullName>
    </alternativeName>
</protein>
<sequence>MRCTILTLFPEFFDSPLDAGLMGKARESGLIDVALVNPRAYTTDRHSTVDDRPYGGGPGMVMRVEPWEKALQGIEEPGRILMMAPKGRPFTQAMARELAQEESLTILCGRYEGFDARLEEIYPIEAVSMGDFVLNGGETAALAVLEAVSRLVPGFMGKEESGTEESFSAGLLEYPHYTRPEDYAGHVVPEVLRSGDHGRIAAWRKECSLRLTLSQRPDILPEAQLDEADMDFLRGLSRNRPGRNLYCALVHYPVVLKEKNSGATSLTNLDIHDIGRSSCTYGLGGFYVTTPLEDQRRLLDTLLRHWTLGPGSRSNPDRAEALGRIKGVDDVRAAIEDIARRTGQVPYVVGTSAKGAGNATPASVRAMLEERPVLLVFGTGHGLAPEVLEGCDAILRPLRWMDGYNHLSVRAAAAIIMDRLLGDCY</sequence>
<dbReference type="EC" id="2.1.1.228"/>
<dbReference type="EMBL" id="AE017285">
    <property type="protein sequence ID" value="AAS95316.1"/>
    <property type="molecule type" value="Genomic_DNA"/>
</dbReference>
<dbReference type="RefSeq" id="WP_010938137.1">
    <property type="nucleotide sequence ID" value="NC_002937.3"/>
</dbReference>
<dbReference type="RefSeq" id="YP_010057.1">
    <property type="nucleotide sequence ID" value="NC_002937.3"/>
</dbReference>
<dbReference type="SMR" id="Q72DU3"/>
<dbReference type="IntAct" id="Q72DU3">
    <property type="interactions" value="2"/>
</dbReference>
<dbReference type="STRING" id="882.DVU_0836"/>
<dbReference type="PaxDb" id="882-DVU_0836"/>
<dbReference type="EnsemblBacteria" id="AAS95316">
    <property type="protein sequence ID" value="AAS95316"/>
    <property type="gene ID" value="DVU_0836"/>
</dbReference>
<dbReference type="KEGG" id="dvu:DVU_0836"/>
<dbReference type="PATRIC" id="fig|882.5.peg.782"/>
<dbReference type="eggNOG" id="COG0336">
    <property type="taxonomic scope" value="Bacteria"/>
</dbReference>
<dbReference type="eggNOG" id="COG4752">
    <property type="taxonomic scope" value="Bacteria"/>
</dbReference>
<dbReference type="HOGENOM" id="CLU_047363_2_0_7"/>
<dbReference type="OrthoDB" id="9807416at2"/>
<dbReference type="PhylomeDB" id="Q72DU3"/>
<dbReference type="Proteomes" id="UP000002194">
    <property type="component" value="Chromosome"/>
</dbReference>
<dbReference type="GO" id="GO:0005829">
    <property type="term" value="C:cytosol"/>
    <property type="evidence" value="ECO:0007669"/>
    <property type="project" value="TreeGrafter"/>
</dbReference>
<dbReference type="GO" id="GO:0052906">
    <property type="term" value="F:tRNA (guanine(37)-N1)-methyltransferase activity"/>
    <property type="evidence" value="ECO:0007669"/>
    <property type="project" value="UniProtKB-UniRule"/>
</dbReference>
<dbReference type="GO" id="GO:0002939">
    <property type="term" value="P:tRNA N1-guanine methylation"/>
    <property type="evidence" value="ECO:0007669"/>
    <property type="project" value="TreeGrafter"/>
</dbReference>
<dbReference type="CDD" id="cd18085">
    <property type="entry name" value="TM1570-like"/>
    <property type="match status" value="1"/>
</dbReference>
<dbReference type="CDD" id="cd18080">
    <property type="entry name" value="TrmD-like"/>
    <property type="match status" value="1"/>
</dbReference>
<dbReference type="FunFam" id="1.10.1270.20:FF:000001">
    <property type="entry name" value="tRNA (guanine-N(1)-)-methyltransferase"/>
    <property type="match status" value="1"/>
</dbReference>
<dbReference type="FunFam" id="3.40.1280.10:FF:000001">
    <property type="entry name" value="tRNA (guanine-N(1)-)-methyltransferase"/>
    <property type="match status" value="1"/>
</dbReference>
<dbReference type="Gene3D" id="3.40.1280.10">
    <property type="match status" value="2"/>
</dbReference>
<dbReference type="Gene3D" id="1.10.1270.20">
    <property type="entry name" value="tRNA(m1g37)methyltransferase, domain 2"/>
    <property type="match status" value="1"/>
</dbReference>
<dbReference type="HAMAP" id="MF_00605">
    <property type="entry name" value="TrmD"/>
    <property type="match status" value="1"/>
</dbReference>
<dbReference type="InterPro" id="IPR029028">
    <property type="entry name" value="Alpha/beta_knot_MTases"/>
</dbReference>
<dbReference type="InterPro" id="IPR019230">
    <property type="entry name" value="RNA_MeTrfase_C_dom"/>
</dbReference>
<dbReference type="InterPro" id="IPR023148">
    <property type="entry name" value="tRNA_m1G_MeTrfase_C_sf"/>
</dbReference>
<dbReference type="InterPro" id="IPR002649">
    <property type="entry name" value="tRNA_m1G_MeTrfase_TrmD"/>
</dbReference>
<dbReference type="InterPro" id="IPR029026">
    <property type="entry name" value="tRNA_m1G_MTases_N"/>
</dbReference>
<dbReference type="InterPro" id="IPR016009">
    <property type="entry name" value="tRNA_MeTrfase_TRMD/TRM10"/>
</dbReference>
<dbReference type="NCBIfam" id="NF000648">
    <property type="entry name" value="PRK00026.1"/>
    <property type="match status" value="1"/>
</dbReference>
<dbReference type="NCBIfam" id="TIGR00088">
    <property type="entry name" value="trmD"/>
    <property type="match status" value="1"/>
</dbReference>
<dbReference type="PANTHER" id="PTHR46417">
    <property type="entry name" value="TRNA (GUANINE-N(1)-)-METHYLTRANSFERASE"/>
    <property type="match status" value="1"/>
</dbReference>
<dbReference type="PANTHER" id="PTHR46417:SF1">
    <property type="entry name" value="TRNA (GUANINE-N(1)-)-METHYLTRANSFERASE"/>
    <property type="match status" value="1"/>
</dbReference>
<dbReference type="Pfam" id="PF09936">
    <property type="entry name" value="Methyltrn_RNA_4"/>
    <property type="match status" value="1"/>
</dbReference>
<dbReference type="Pfam" id="PF01746">
    <property type="entry name" value="tRNA_m1G_MT"/>
    <property type="match status" value="1"/>
</dbReference>
<dbReference type="SUPFAM" id="SSF75217">
    <property type="entry name" value="alpha/beta knot"/>
    <property type="match status" value="1"/>
</dbReference>
<gene>
    <name type="primary">trmD</name>
    <name type="ordered locus">DVU_0836</name>
</gene>
<accession>Q72DU3</accession>
<evidence type="ECO:0000250" key="1"/>
<evidence type="ECO:0000305" key="2"/>
<reference key="1">
    <citation type="journal article" date="2004" name="Nat. Biotechnol.">
        <title>The genome sequence of the anaerobic, sulfate-reducing bacterium Desulfovibrio vulgaris Hildenborough.</title>
        <authorList>
            <person name="Heidelberg J.F."/>
            <person name="Seshadri R."/>
            <person name="Haveman S.A."/>
            <person name="Hemme C.L."/>
            <person name="Paulsen I.T."/>
            <person name="Kolonay J.F."/>
            <person name="Eisen J.A."/>
            <person name="Ward N.L."/>
            <person name="Methe B.A."/>
            <person name="Brinkac L.M."/>
            <person name="Daugherty S.C."/>
            <person name="DeBoy R.T."/>
            <person name="Dodson R.J."/>
            <person name="Durkin A.S."/>
            <person name="Madupu R."/>
            <person name="Nelson W.C."/>
            <person name="Sullivan S.A."/>
            <person name="Fouts D.E."/>
            <person name="Haft D.H."/>
            <person name="Selengut J."/>
            <person name="Peterson J.D."/>
            <person name="Davidsen T.M."/>
            <person name="Zafar N."/>
            <person name="Zhou L."/>
            <person name="Radune D."/>
            <person name="Dimitrov G."/>
            <person name="Hance M."/>
            <person name="Tran K."/>
            <person name="Khouri H.M."/>
            <person name="Gill J."/>
            <person name="Utterback T.R."/>
            <person name="Feldblyum T.V."/>
            <person name="Wall J.D."/>
            <person name="Voordouw G."/>
            <person name="Fraser C.M."/>
        </authorList>
    </citation>
    <scope>NUCLEOTIDE SEQUENCE [LARGE SCALE GENOMIC DNA]</scope>
    <source>
        <strain>ATCC 29579 / DSM 644 / CCUG 34227 / NCIMB 8303 / VKM B-1760 / Hildenborough</strain>
    </source>
</reference>
<keyword id="KW-0963">Cytoplasm</keyword>
<keyword id="KW-0489">Methyltransferase</keyword>
<keyword id="KW-1185">Reference proteome</keyword>
<keyword id="KW-0949">S-adenosyl-L-methionine</keyword>
<keyword id="KW-0808">Transferase</keyword>
<keyword id="KW-0819">tRNA processing</keyword>